<organism>
    <name type="scientific">Escherichia coli O157:H7</name>
    <dbReference type="NCBI Taxonomy" id="83334"/>
    <lineage>
        <taxon>Bacteria</taxon>
        <taxon>Pseudomonadati</taxon>
        <taxon>Pseudomonadota</taxon>
        <taxon>Gammaproteobacteria</taxon>
        <taxon>Enterobacterales</taxon>
        <taxon>Enterobacteriaceae</taxon>
        <taxon>Escherichia</taxon>
    </lineage>
</organism>
<keyword id="KW-0328">Glycosyltransferase</keyword>
<keyword id="KW-1185">Reference proteome</keyword>
<keyword id="KW-0808">Transferase</keyword>
<feature type="chain" id="PRO_0000208428" description="UDP-N-acetyl-D-mannosaminuronic acid transferase">
    <location>
        <begin position="1"/>
        <end position="246"/>
    </location>
</feature>
<sequence>MNNNTTAPTYTLRGLQLIGWRDMQHALDYLFADGQLKQGTLVAINAEKMLTIEENAEVRELINAAEFKYADGISVVRSVRKKYPQAQVSRVAGADLWEELMARAGKEGTTVFLVGGKPEVLAQTEAKLRNQWNVNIVGSQDGYFKPEQRQALFERIHASGAQIVTVAMGSPKQEIFMRDCRLVHPDALYMGVGGTYDVFTGHVKRAPKIWQTLGLEWLYRLLSQPSRIKRQLRLLRYLRWHYTGNL</sequence>
<accession>Q8XAQ3</accession>
<proteinExistence type="inferred from homology"/>
<gene>
    <name evidence="1" type="primary">wecG</name>
    <name evidence="1" type="synonym">rffM</name>
    <name type="ordered locus">Z5306</name>
    <name type="ordered locus">ECs4728</name>
</gene>
<protein>
    <recommendedName>
        <fullName evidence="1">UDP-N-acetyl-D-mannosaminuronic acid transferase</fullName>
        <shortName evidence="1">UDP-ManNAcA transferase</shortName>
        <ecNumber evidence="1">2.4.1.180</ecNumber>
    </recommendedName>
</protein>
<dbReference type="EC" id="2.4.1.180" evidence="1"/>
<dbReference type="EMBL" id="AE005174">
    <property type="protein sequence ID" value="AAG58990.1"/>
    <property type="molecule type" value="Genomic_DNA"/>
</dbReference>
<dbReference type="EMBL" id="BA000007">
    <property type="protein sequence ID" value="BAB38151.1"/>
    <property type="molecule type" value="Genomic_DNA"/>
</dbReference>
<dbReference type="PIR" id="B86066">
    <property type="entry name" value="B86066"/>
</dbReference>
<dbReference type="PIR" id="H91219">
    <property type="entry name" value="H91219"/>
</dbReference>
<dbReference type="RefSeq" id="NP_312755.1">
    <property type="nucleotide sequence ID" value="NC_002695.1"/>
</dbReference>
<dbReference type="RefSeq" id="WP_001064053.1">
    <property type="nucleotide sequence ID" value="NZ_VOAI01000017.1"/>
</dbReference>
<dbReference type="SMR" id="Q8XAQ3"/>
<dbReference type="STRING" id="155864.Z5306"/>
<dbReference type="CAZy" id="GT26">
    <property type="family name" value="Glycosyltransferase Family 26"/>
</dbReference>
<dbReference type="GeneID" id="915133"/>
<dbReference type="KEGG" id="ece:Z5306"/>
<dbReference type="KEGG" id="ecs:ECs_4728"/>
<dbReference type="PATRIC" id="fig|386585.9.peg.4932"/>
<dbReference type="eggNOG" id="COG1922">
    <property type="taxonomic scope" value="Bacteria"/>
</dbReference>
<dbReference type="HOGENOM" id="CLU_063203_3_2_6"/>
<dbReference type="OMA" id="LYQEPWR"/>
<dbReference type="UniPathway" id="UPA00566"/>
<dbReference type="Proteomes" id="UP000000558">
    <property type="component" value="Chromosome"/>
</dbReference>
<dbReference type="Proteomes" id="UP000002519">
    <property type="component" value="Chromosome"/>
</dbReference>
<dbReference type="GO" id="GO:0047241">
    <property type="term" value="F:lipopolysaccharide N-acetylmannosaminouronosyltransferase activity"/>
    <property type="evidence" value="ECO:0007669"/>
    <property type="project" value="UniProtKB-UniRule"/>
</dbReference>
<dbReference type="GO" id="GO:0009246">
    <property type="term" value="P:enterobacterial common antigen biosynthetic process"/>
    <property type="evidence" value="ECO:0007669"/>
    <property type="project" value="UniProtKB-UniRule"/>
</dbReference>
<dbReference type="CDD" id="cd06533">
    <property type="entry name" value="Glyco_transf_WecG_TagA"/>
    <property type="match status" value="1"/>
</dbReference>
<dbReference type="HAMAP" id="MF_01001">
    <property type="entry name" value="WecG_RffM"/>
    <property type="match status" value="1"/>
</dbReference>
<dbReference type="InterPro" id="IPR023085">
    <property type="entry name" value="UDP-ManNAcA_Trfase_WecG"/>
</dbReference>
<dbReference type="InterPro" id="IPR004629">
    <property type="entry name" value="WecG_TagA_CpsF"/>
</dbReference>
<dbReference type="NCBIfam" id="NF002980">
    <property type="entry name" value="PRK03692.1"/>
    <property type="match status" value="1"/>
</dbReference>
<dbReference type="NCBIfam" id="TIGR00696">
    <property type="entry name" value="wecG_tagA_cpsF"/>
    <property type="match status" value="1"/>
</dbReference>
<dbReference type="PANTHER" id="PTHR34136">
    <property type="match status" value="1"/>
</dbReference>
<dbReference type="PANTHER" id="PTHR34136:SF1">
    <property type="entry name" value="UDP-N-ACETYL-D-MANNOSAMINURONIC ACID TRANSFERASE"/>
    <property type="match status" value="1"/>
</dbReference>
<dbReference type="Pfam" id="PF03808">
    <property type="entry name" value="Glyco_tran_WecG"/>
    <property type="match status" value="1"/>
</dbReference>
<comment type="function">
    <text evidence="1">Catalyzes the synthesis of Und-PP-GlcNAc-ManNAcA (Lipid II), the second lipid-linked intermediate involved in enterobacterial common antigen (ECA) synthesis.</text>
</comment>
<comment type="catalytic activity">
    <reaction evidence="1">
        <text>UDP-N-acetyl-alpha-D-mannosaminouronate + N-acetyl-alpha-D-glucosaminyl-di-trans,octa-cis-undecaprenyl diphosphate = beta-D-ManNAcA-(1-&gt;4)-alpha-D-GlcNAc-di-trans,octa-cis-undecaprenyl diphosphate + UDP + H(+)</text>
        <dbReference type="Rhea" id="RHEA:28366"/>
        <dbReference type="ChEBI" id="CHEBI:15378"/>
        <dbReference type="ChEBI" id="CHEBI:58223"/>
        <dbReference type="ChEBI" id="CHEBI:61495"/>
        <dbReference type="ChEBI" id="CHEBI:62959"/>
        <dbReference type="ChEBI" id="CHEBI:70731"/>
        <dbReference type="EC" id="2.4.1.180"/>
    </reaction>
</comment>
<comment type="pathway">
    <text evidence="1">Bacterial outer membrane biogenesis; enterobacterial common antigen biosynthesis.</text>
</comment>
<comment type="similarity">
    <text evidence="1">Belongs to the glycosyltransferase 26 family.</text>
</comment>
<evidence type="ECO:0000255" key="1">
    <source>
        <dbReference type="HAMAP-Rule" id="MF_01001"/>
    </source>
</evidence>
<name>WECG_ECO57</name>
<reference key="1">
    <citation type="journal article" date="2001" name="Nature">
        <title>Genome sequence of enterohaemorrhagic Escherichia coli O157:H7.</title>
        <authorList>
            <person name="Perna N.T."/>
            <person name="Plunkett G. III"/>
            <person name="Burland V."/>
            <person name="Mau B."/>
            <person name="Glasner J.D."/>
            <person name="Rose D.J."/>
            <person name="Mayhew G.F."/>
            <person name="Evans P.S."/>
            <person name="Gregor J."/>
            <person name="Kirkpatrick H.A."/>
            <person name="Posfai G."/>
            <person name="Hackett J."/>
            <person name="Klink S."/>
            <person name="Boutin A."/>
            <person name="Shao Y."/>
            <person name="Miller L."/>
            <person name="Grotbeck E.J."/>
            <person name="Davis N.W."/>
            <person name="Lim A."/>
            <person name="Dimalanta E.T."/>
            <person name="Potamousis K."/>
            <person name="Apodaca J."/>
            <person name="Anantharaman T.S."/>
            <person name="Lin J."/>
            <person name="Yen G."/>
            <person name="Schwartz D.C."/>
            <person name="Welch R.A."/>
            <person name="Blattner F.R."/>
        </authorList>
    </citation>
    <scope>NUCLEOTIDE SEQUENCE [LARGE SCALE GENOMIC DNA]</scope>
    <source>
        <strain>O157:H7 / EDL933 / ATCC 700927 / EHEC</strain>
    </source>
</reference>
<reference key="2">
    <citation type="journal article" date="2001" name="DNA Res.">
        <title>Complete genome sequence of enterohemorrhagic Escherichia coli O157:H7 and genomic comparison with a laboratory strain K-12.</title>
        <authorList>
            <person name="Hayashi T."/>
            <person name="Makino K."/>
            <person name="Ohnishi M."/>
            <person name="Kurokawa K."/>
            <person name="Ishii K."/>
            <person name="Yokoyama K."/>
            <person name="Han C.-G."/>
            <person name="Ohtsubo E."/>
            <person name="Nakayama K."/>
            <person name="Murata T."/>
            <person name="Tanaka M."/>
            <person name="Tobe T."/>
            <person name="Iida T."/>
            <person name="Takami H."/>
            <person name="Honda T."/>
            <person name="Sasakawa C."/>
            <person name="Ogasawara N."/>
            <person name="Yasunaga T."/>
            <person name="Kuhara S."/>
            <person name="Shiba T."/>
            <person name="Hattori M."/>
            <person name="Shinagawa H."/>
        </authorList>
    </citation>
    <scope>NUCLEOTIDE SEQUENCE [LARGE SCALE GENOMIC DNA]</scope>
    <source>
        <strain>O157:H7 / Sakai / RIMD 0509952 / EHEC</strain>
    </source>
</reference>